<reference key="1">
    <citation type="journal article" date="2004" name="Proc. Natl. Acad. Sci. U.S.A.">
        <title>The louse-borne human pathogen Bartonella quintana is a genomic derivative of the zoonotic agent Bartonella henselae.</title>
        <authorList>
            <person name="Alsmark U.C.M."/>
            <person name="Frank A.C."/>
            <person name="Karlberg E.O."/>
            <person name="Legault B.-A."/>
            <person name="Ardell D.H."/>
            <person name="Canbaeck B."/>
            <person name="Eriksson A.-S."/>
            <person name="Naeslund A.K."/>
            <person name="Handley S.A."/>
            <person name="Huvet M."/>
            <person name="La Scola B."/>
            <person name="Holmberg M."/>
            <person name="Andersson S.G.E."/>
        </authorList>
    </citation>
    <scope>NUCLEOTIDE SEQUENCE [LARGE SCALE GENOMIC DNA]</scope>
    <source>
        <strain>ATCC 49882 / DSM 28221 / CCUG 30454 / Houston 1</strain>
    </source>
</reference>
<name>CARA_BARHE</name>
<organism>
    <name type="scientific">Bartonella henselae (strain ATCC 49882 / DSM 28221 / CCUG 30454 / Houston 1)</name>
    <name type="common">Rochalimaea henselae</name>
    <dbReference type="NCBI Taxonomy" id="283166"/>
    <lineage>
        <taxon>Bacteria</taxon>
        <taxon>Pseudomonadati</taxon>
        <taxon>Pseudomonadota</taxon>
        <taxon>Alphaproteobacteria</taxon>
        <taxon>Hyphomicrobiales</taxon>
        <taxon>Bartonellaceae</taxon>
        <taxon>Bartonella</taxon>
    </lineage>
</organism>
<comment type="function">
    <text evidence="1">Small subunit of the glutamine-dependent carbamoyl phosphate synthetase (CPSase). CPSase catalyzes the formation of carbamoyl phosphate from the ammonia moiety of glutamine, carbonate, and phosphate donated by ATP, constituting the first step of 2 biosynthetic pathways, one leading to arginine and/or urea and the other to pyrimidine nucleotides. The small subunit (glutamine amidotransferase) binds and cleaves glutamine to supply the large subunit with the substrate ammonia.</text>
</comment>
<comment type="catalytic activity">
    <reaction evidence="1">
        <text>hydrogencarbonate + L-glutamine + 2 ATP + H2O = carbamoyl phosphate + L-glutamate + 2 ADP + phosphate + 2 H(+)</text>
        <dbReference type="Rhea" id="RHEA:18633"/>
        <dbReference type="ChEBI" id="CHEBI:15377"/>
        <dbReference type="ChEBI" id="CHEBI:15378"/>
        <dbReference type="ChEBI" id="CHEBI:17544"/>
        <dbReference type="ChEBI" id="CHEBI:29985"/>
        <dbReference type="ChEBI" id="CHEBI:30616"/>
        <dbReference type="ChEBI" id="CHEBI:43474"/>
        <dbReference type="ChEBI" id="CHEBI:58228"/>
        <dbReference type="ChEBI" id="CHEBI:58359"/>
        <dbReference type="ChEBI" id="CHEBI:456216"/>
        <dbReference type="EC" id="6.3.5.5"/>
    </reaction>
</comment>
<comment type="catalytic activity">
    <molecule>Carbamoyl phosphate synthase small chain</molecule>
    <reaction evidence="1">
        <text>L-glutamine + H2O = L-glutamate + NH4(+)</text>
        <dbReference type="Rhea" id="RHEA:15889"/>
        <dbReference type="ChEBI" id="CHEBI:15377"/>
        <dbReference type="ChEBI" id="CHEBI:28938"/>
        <dbReference type="ChEBI" id="CHEBI:29985"/>
        <dbReference type="ChEBI" id="CHEBI:58359"/>
    </reaction>
</comment>
<comment type="pathway">
    <text evidence="1">Amino-acid biosynthesis; L-arginine biosynthesis; carbamoyl phosphate from bicarbonate: step 1/1.</text>
</comment>
<comment type="pathway">
    <text evidence="1">Pyrimidine metabolism; UMP biosynthesis via de novo pathway; (S)-dihydroorotate from bicarbonate: step 1/3.</text>
</comment>
<comment type="subunit">
    <text evidence="1">Composed of two chains; the small (or glutamine) chain promotes the hydrolysis of glutamine to ammonia, which is used by the large (or ammonia) chain to synthesize carbamoyl phosphate. Tetramer of heterodimers (alpha,beta)4.</text>
</comment>
<comment type="similarity">
    <text evidence="1">Belongs to the CarA family.</text>
</comment>
<keyword id="KW-0028">Amino-acid biosynthesis</keyword>
<keyword id="KW-0055">Arginine biosynthesis</keyword>
<keyword id="KW-0067">ATP-binding</keyword>
<keyword id="KW-0315">Glutamine amidotransferase</keyword>
<keyword id="KW-0436">Ligase</keyword>
<keyword id="KW-0547">Nucleotide-binding</keyword>
<keyword id="KW-0665">Pyrimidine biosynthesis</keyword>
<sequence>MTQTIPSPKPWSINKPTALLVLANGTVIEGKGAGATGFAEAEICFNTAMTGYEEILTDPSYKKQIVNFTFPHIGNVGTNSEDIEDLIPLNCHGAVGAIFKADITHPSNYRANENLNQWLKKRKIIALCGIDTRALTVLIREKGALNGIIAHDPNGNFDINTLKKRAQKWTGLVNLDLAQEVTSKQSMKWNEKPWVWNKGYKTNNDASNFHIVAIDYGIKRNILRLIAAHSAHITIVPANTNIEEILAMNPDGVFLSNGPGDPAATANYAVPTIQALIDSNIPLFGICLGHQLLALAVGAKTIKMHQGHHGANHPVKDFITGKVEIVSMNHGFTVDTTSLPQHVEETHISLFDNSNCGLRIIGKPVFSVQHHPEASPGPQDSHYLFQRFFNLIMDYKKTA</sequence>
<evidence type="ECO:0000255" key="1">
    <source>
        <dbReference type="HAMAP-Rule" id="MF_01209"/>
    </source>
</evidence>
<dbReference type="EC" id="6.3.5.5" evidence="1"/>
<dbReference type="EMBL" id="BX897699">
    <property type="protein sequence ID" value="CAF27942.1"/>
    <property type="molecule type" value="Genomic_DNA"/>
</dbReference>
<dbReference type="RefSeq" id="WP_011181001.1">
    <property type="nucleotide sequence ID" value="NZ_LRIJ02000001.1"/>
</dbReference>
<dbReference type="SMR" id="Q6G5M0"/>
<dbReference type="PaxDb" id="283166-BH11590"/>
<dbReference type="EnsemblBacteria" id="CAF27942">
    <property type="protein sequence ID" value="CAF27942"/>
    <property type="gene ID" value="BH11590"/>
</dbReference>
<dbReference type="GeneID" id="92985770"/>
<dbReference type="KEGG" id="bhe:BH11590"/>
<dbReference type="eggNOG" id="COG0505">
    <property type="taxonomic scope" value="Bacteria"/>
</dbReference>
<dbReference type="OrthoDB" id="9804328at2"/>
<dbReference type="UniPathway" id="UPA00068">
    <property type="reaction ID" value="UER00171"/>
</dbReference>
<dbReference type="UniPathway" id="UPA00070">
    <property type="reaction ID" value="UER00115"/>
</dbReference>
<dbReference type="Proteomes" id="UP000000421">
    <property type="component" value="Chromosome"/>
</dbReference>
<dbReference type="GO" id="GO:0005524">
    <property type="term" value="F:ATP binding"/>
    <property type="evidence" value="ECO:0007669"/>
    <property type="project" value="UniProtKB-UniRule"/>
</dbReference>
<dbReference type="GO" id="GO:0004088">
    <property type="term" value="F:carbamoyl-phosphate synthase (glutamine-hydrolyzing) activity"/>
    <property type="evidence" value="ECO:0007669"/>
    <property type="project" value="UniProtKB-UniRule"/>
</dbReference>
<dbReference type="GO" id="GO:0004359">
    <property type="term" value="F:glutaminase activity"/>
    <property type="evidence" value="ECO:0007669"/>
    <property type="project" value="RHEA"/>
</dbReference>
<dbReference type="GO" id="GO:0006207">
    <property type="term" value="P:'de novo' pyrimidine nucleobase biosynthetic process"/>
    <property type="evidence" value="ECO:0007669"/>
    <property type="project" value="InterPro"/>
</dbReference>
<dbReference type="GO" id="GO:0044205">
    <property type="term" value="P:'de novo' UMP biosynthetic process"/>
    <property type="evidence" value="ECO:0007669"/>
    <property type="project" value="UniProtKB-UniRule"/>
</dbReference>
<dbReference type="GO" id="GO:0006541">
    <property type="term" value="P:glutamine metabolic process"/>
    <property type="evidence" value="ECO:0007669"/>
    <property type="project" value="InterPro"/>
</dbReference>
<dbReference type="GO" id="GO:0006526">
    <property type="term" value="P:L-arginine biosynthetic process"/>
    <property type="evidence" value="ECO:0007669"/>
    <property type="project" value="UniProtKB-UniRule"/>
</dbReference>
<dbReference type="CDD" id="cd01744">
    <property type="entry name" value="GATase1_CPSase"/>
    <property type="match status" value="1"/>
</dbReference>
<dbReference type="Gene3D" id="3.40.50.880">
    <property type="match status" value="1"/>
</dbReference>
<dbReference type="Gene3D" id="3.50.30.20">
    <property type="entry name" value="Carbamoyl-phosphate synthase small subunit, N-terminal domain"/>
    <property type="match status" value="1"/>
</dbReference>
<dbReference type="HAMAP" id="MF_01209">
    <property type="entry name" value="CPSase_S_chain"/>
    <property type="match status" value="1"/>
</dbReference>
<dbReference type="InterPro" id="IPR050472">
    <property type="entry name" value="Anth_synth/Amidotransfase"/>
</dbReference>
<dbReference type="InterPro" id="IPR006274">
    <property type="entry name" value="CarbamoylP_synth_ssu"/>
</dbReference>
<dbReference type="InterPro" id="IPR002474">
    <property type="entry name" value="CarbamoylP_synth_ssu_N"/>
</dbReference>
<dbReference type="InterPro" id="IPR036480">
    <property type="entry name" value="CarbP_synth_ssu_N_sf"/>
</dbReference>
<dbReference type="InterPro" id="IPR029062">
    <property type="entry name" value="Class_I_gatase-like"/>
</dbReference>
<dbReference type="InterPro" id="IPR035686">
    <property type="entry name" value="CPSase_GATase1"/>
</dbReference>
<dbReference type="InterPro" id="IPR017926">
    <property type="entry name" value="GATASE"/>
</dbReference>
<dbReference type="NCBIfam" id="TIGR01368">
    <property type="entry name" value="CPSaseIIsmall"/>
    <property type="match status" value="1"/>
</dbReference>
<dbReference type="NCBIfam" id="NF009475">
    <property type="entry name" value="PRK12838.1"/>
    <property type="match status" value="1"/>
</dbReference>
<dbReference type="PANTHER" id="PTHR43418:SF7">
    <property type="entry name" value="CARBAMOYL-PHOSPHATE SYNTHASE SMALL CHAIN"/>
    <property type="match status" value="1"/>
</dbReference>
<dbReference type="PANTHER" id="PTHR43418">
    <property type="entry name" value="MULTIFUNCTIONAL TRYPTOPHAN BIOSYNTHESIS PROTEIN-RELATED"/>
    <property type="match status" value="1"/>
</dbReference>
<dbReference type="Pfam" id="PF00988">
    <property type="entry name" value="CPSase_sm_chain"/>
    <property type="match status" value="1"/>
</dbReference>
<dbReference type="Pfam" id="PF00117">
    <property type="entry name" value="GATase"/>
    <property type="match status" value="1"/>
</dbReference>
<dbReference type="PRINTS" id="PR00097">
    <property type="entry name" value="ANTSNTHASEII"/>
</dbReference>
<dbReference type="PRINTS" id="PR00099">
    <property type="entry name" value="CPSGATASE"/>
</dbReference>
<dbReference type="PRINTS" id="PR00096">
    <property type="entry name" value="GATASE"/>
</dbReference>
<dbReference type="SMART" id="SM01097">
    <property type="entry name" value="CPSase_sm_chain"/>
    <property type="match status" value="1"/>
</dbReference>
<dbReference type="SUPFAM" id="SSF52021">
    <property type="entry name" value="Carbamoyl phosphate synthetase, small subunit N-terminal domain"/>
    <property type="match status" value="1"/>
</dbReference>
<dbReference type="SUPFAM" id="SSF52317">
    <property type="entry name" value="Class I glutamine amidotransferase-like"/>
    <property type="match status" value="1"/>
</dbReference>
<dbReference type="PROSITE" id="PS51273">
    <property type="entry name" value="GATASE_TYPE_1"/>
    <property type="match status" value="1"/>
</dbReference>
<proteinExistence type="inferred from homology"/>
<gene>
    <name evidence="1" type="primary">carA</name>
    <name type="ordered locus">BH11590</name>
</gene>
<feature type="chain" id="PRO_1000138849" description="Carbamoyl phosphate synthase small chain">
    <location>
        <begin position="1"/>
        <end position="399"/>
    </location>
</feature>
<feature type="domain" description="Glutamine amidotransferase type-1" evidence="1">
    <location>
        <begin position="210"/>
        <end position="398"/>
    </location>
</feature>
<feature type="region of interest" description="CPSase" evidence="1">
    <location>
        <begin position="1"/>
        <end position="206"/>
    </location>
</feature>
<feature type="active site" description="Nucleophile" evidence="1">
    <location>
        <position position="287"/>
    </location>
</feature>
<feature type="active site" evidence="1">
    <location>
        <position position="371"/>
    </location>
</feature>
<feature type="active site" evidence="1">
    <location>
        <position position="373"/>
    </location>
</feature>
<feature type="binding site" evidence="1">
    <location>
        <position position="60"/>
    </location>
    <ligand>
        <name>L-glutamine</name>
        <dbReference type="ChEBI" id="CHEBI:58359"/>
    </ligand>
</feature>
<feature type="binding site" evidence="1">
    <location>
        <position position="258"/>
    </location>
    <ligand>
        <name>L-glutamine</name>
        <dbReference type="ChEBI" id="CHEBI:58359"/>
    </ligand>
</feature>
<feature type="binding site" evidence="1">
    <location>
        <position position="260"/>
    </location>
    <ligand>
        <name>L-glutamine</name>
        <dbReference type="ChEBI" id="CHEBI:58359"/>
    </ligand>
</feature>
<feature type="binding site" evidence="1">
    <location>
        <position position="288"/>
    </location>
    <ligand>
        <name>L-glutamine</name>
        <dbReference type="ChEBI" id="CHEBI:58359"/>
    </ligand>
</feature>
<feature type="binding site" evidence="1">
    <location>
        <position position="291"/>
    </location>
    <ligand>
        <name>L-glutamine</name>
        <dbReference type="ChEBI" id="CHEBI:58359"/>
    </ligand>
</feature>
<feature type="binding site" evidence="1">
    <location>
        <position position="329"/>
    </location>
    <ligand>
        <name>L-glutamine</name>
        <dbReference type="ChEBI" id="CHEBI:58359"/>
    </ligand>
</feature>
<feature type="binding site" evidence="1">
    <location>
        <position position="331"/>
    </location>
    <ligand>
        <name>L-glutamine</name>
        <dbReference type="ChEBI" id="CHEBI:58359"/>
    </ligand>
</feature>
<feature type="binding site" evidence="1">
    <location>
        <position position="332"/>
    </location>
    <ligand>
        <name>L-glutamine</name>
        <dbReference type="ChEBI" id="CHEBI:58359"/>
    </ligand>
</feature>
<protein>
    <recommendedName>
        <fullName evidence="1">Carbamoyl phosphate synthase small chain</fullName>
        <ecNumber evidence="1">6.3.5.5</ecNumber>
    </recommendedName>
    <alternativeName>
        <fullName evidence="1">Carbamoyl phosphate synthetase glutamine chain</fullName>
    </alternativeName>
</protein>
<accession>Q6G5M0</accession>